<protein>
    <recommendedName>
        <fullName evidence="6">Alpha-conotoxin AuIB</fullName>
    </recommendedName>
</protein>
<organism>
    <name type="scientific">Conus aulicus</name>
    <name type="common">Princely cone</name>
    <dbReference type="NCBI Taxonomy" id="89437"/>
    <lineage>
        <taxon>Eukaryota</taxon>
        <taxon>Metazoa</taxon>
        <taxon>Spiralia</taxon>
        <taxon>Lophotrochozoa</taxon>
        <taxon>Mollusca</taxon>
        <taxon>Gastropoda</taxon>
        <taxon>Caenogastropoda</taxon>
        <taxon>Neogastropoda</taxon>
        <taxon>Conoidea</taxon>
        <taxon>Conidae</taxon>
        <taxon>Conus</taxon>
        <taxon>Darioconus</taxon>
    </lineage>
</organism>
<reference key="1">
    <citation type="patent" date="2004-09-28" number="US6797808">
        <title>Alpha-conotoxin peptides.</title>
        <authorList>
            <person name="Watkins M."/>
            <person name="Olivera B.M."/>
            <person name="Hillyard D.R."/>
            <person name="McIntosh J.M."/>
            <person name="Jones R.M."/>
        </authorList>
    </citation>
    <scope>NUCLEOTIDE SEQUENCE [GENOMIC DNA]</scope>
    <source>
        <tissue>Venom</tissue>
    </source>
</reference>
<reference key="2">
    <citation type="journal article" date="1998" name="J. Neurosci.">
        <title>Alpha-conotoxin AuIB selectively blocks alpha3 beta4 nicotinic acetylcholine receptors and nicotine-evoked norepinephrine release.</title>
        <authorList>
            <person name="Luo S."/>
            <person name="Kulak J.M."/>
            <person name="Cartier G.E."/>
            <person name="Jacobsen R.B."/>
            <person name="Yoshikami D."/>
            <person name="Olivera B.M."/>
            <person name="McIntosh J.M."/>
        </authorList>
    </citation>
    <scope>PROTEIN SEQUENCE OF 40-54</scope>
    <scope>SYNTHESIS OF 40-54</scope>
    <scope>FUNCTION</scope>
    <scope>AMIDATION AT CYS-54</scope>
    <scope>DISULFIDE BONDS</scope>
    <scope>MASS SPECTROMETRY</scope>
    <scope>SUBCELLULAR LOCATION</scope>
    <source>
        <tissue>Venom</tissue>
    </source>
</reference>
<reference key="3">
    <citation type="journal article" date="2015" name="FASEB J.">
        <title>Inhibition of cholinergic pathways in Drosophila melanogaster by alpha-conotoxins.</title>
        <authorList>
            <person name="Heghinian M.D."/>
            <person name="Mejia M."/>
            <person name="Adams D.J."/>
            <person name="Godenschwege T.A."/>
            <person name="Mari F."/>
        </authorList>
    </citation>
    <scope>FUNCTION</scope>
</reference>
<reference key="4">
    <citation type="journal article" date="2000" name="J. Biol. Chem.">
        <title>Nuclear magnetic resonance solution conformation of alpha-conotoxin AuIB, an alpha(3)beta(4) subtype-selective neuronal nicotinic acetylcholine receptor antagonist.</title>
        <authorList>
            <person name="Cho J.H."/>
            <person name="Mok K.H."/>
            <person name="Olivera B.M."/>
            <person name="McIntosh J.M."/>
            <person name="Park K.H."/>
            <person name="Han K.H."/>
        </authorList>
    </citation>
    <scope>STRUCTURE BY NMR</scope>
    <scope>AMIDATION AT CYS-54</scope>
    <scope>DISULFIDE BONDS</scope>
</reference>
<reference key="5">
    <citation type="journal article" date="2002" name="J. Biol. Chem.">
        <title>A new level of conotoxin diversity, a non-native disulfide bond connectivity in alpha-conotoxin AuIB reduces structural definition but increases biological activity.</title>
        <authorList>
            <person name="Dutton J.L."/>
            <person name="Bansal P.S."/>
            <person name="Hogg R.C."/>
            <person name="Adams D.J."/>
            <person name="Alewood P.F."/>
            <person name="Craik D.J."/>
        </authorList>
    </citation>
    <scope>STRUCTURE BY NMR</scope>
    <scope>AMIDATION AT CYS-54</scope>
    <scope>DISULFIDE BONDS</scope>
</reference>
<proteinExistence type="evidence at protein level"/>
<sequence>MFTVFLLVVLATTVVSFTSDRASDGRKDAASGLIALTMKGCCSYPPCFATNPDCGRRR</sequence>
<name>CA1B_CONAL</name>
<keyword id="KW-0002">3D-structure</keyword>
<keyword id="KW-0008">Acetylcholine receptor inhibiting toxin</keyword>
<keyword id="KW-0027">Amidation</keyword>
<keyword id="KW-0903">Direct protein sequencing</keyword>
<keyword id="KW-1015">Disulfide bond</keyword>
<keyword id="KW-0872">Ion channel impairing toxin</keyword>
<keyword id="KW-0528">Neurotoxin</keyword>
<keyword id="KW-0629">Postsynaptic neurotoxin</keyword>
<keyword id="KW-0964">Secreted</keyword>
<keyword id="KW-0732">Signal</keyword>
<keyword id="KW-0800">Toxin</keyword>
<accession>P56640</accession>
<feature type="signal peptide" evidence="1">
    <location>
        <begin position="1"/>
        <end position="16"/>
    </location>
</feature>
<feature type="propeptide" id="PRO_0000381164" evidence="5">
    <location>
        <begin position="17"/>
        <end position="39"/>
    </location>
</feature>
<feature type="peptide" id="PRO_0000044455" description="Alpha-conotoxin AuIB" evidence="5">
    <location>
        <begin position="40"/>
        <end position="54"/>
    </location>
</feature>
<feature type="modified residue" description="Cysteine amide" evidence="2 3 5">
    <location>
        <position position="54"/>
    </location>
</feature>
<feature type="disulfide bond" evidence="2 3 5 9 10">
    <location>
        <begin position="41"/>
        <end position="47"/>
    </location>
</feature>
<feature type="disulfide bond" evidence="2 3 5 9 10">
    <location>
        <begin position="42"/>
        <end position="54"/>
    </location>
</feature>
<feature type="turn" evidence="11">
    <location>
        <begin position="41"/>
        <end position="43"/>
    </location>
</feature>
<feature type="helix" evidence="11">
    <location>
        <begin position="45"/>
        <end position="50"/>
    </location>
</feature>
<dbReference type="EMBL" id="AR584804">
    <property type="status" value="NOT_ANNOTATED_CDS"/>
    <property type="molecule type" value="Genomic_DNA"/>
</dbReference>
<dbReference type="PIR" id="B59045">
    <property type="entry name" value="B59045"/>
</dbReference>
<dbReference type="PDB" id="1DG2">
    <property type="method" value="NMR"/>
    <property type="chains" value="A=40-54"/>
</dbReference>
<dbReference type="PDB" id="1MXN">
    <property type="method" value="NMR"/>
    <property type="chains" value="A=40-54"/>
</dbReference>
<dbReference type="PDB" id="1MXP">
    <property type="method" value="NMR"/>
    <property type="chains" value="A=40-54"/>
</dbReference>
<dbReference type="PDBsum" id="1DG2"/>
<dbReference type="PDBsum" id="1MXN"/>
<dbReference type="PDBsum" id="1MXP"/>
<dbReference type="SMR" id="P56640"/>
<dbReference type="ConoServer" id="2879">
    <property type="toxin name" value="AuIB precursor"/>
</dbReference>
<dbReference type="EvolutionaryTrace" id="P56640"/>
<dbReference type="GO" id="GO:0005576">
    <property type="term" value="C:extracellular region"/>
    <property type="evidence" value="ECO:0007669"/>
    <property type="project" value="UniProtKB-SubCell"/>
</dbReference>
<dbReference type="GO" id="GO:0035792">
    <property type="term" value="C:host cell postsynaptic membrane"/>
    <property type="evidence" value="ECO:0007669"/>
    <property type="project" value="UniProtKB-KW"/>
</dbReference>
<dbReference type="GO" id="GO:0030550">
    <property type="term" value="F:acetylcholine receptor inhibitor activity"/>
    <property type="evidence" value="ECO:0007669"/>
    <property type="project" value="UniProtKB-KW"/>
</dbReference>
<dbReference type="GO" id="GO:0099106">
    <property type="term" value="F:ion channel regulator activity"/>
    <property type="evidence" value="ECO:0007669"/>
    <property type="project" value="UniProtKB-KW"/>
</dbReference>
<dbReference type="GO" id="GO:0090729">
    <property type="term" value="F:toxin activity"/>
    <property type="evidence" value="ECO:0007669"/>
    <property type="project" value="UniProtKB-KW"/>
</dbReference>
<dbReference type="InterPro" id="IPR009958">
    <property type="entry name" value="Conotoxin_a-typ"/>
</dbReference>
<dbReference type="InterPro" id="IPR018072">
    <property type="entry name" value="Conotoxin_a-typ_CS"/>
</dbReference>
<dbReference type="Pfam" id="PF07365">
    <property type="entry name" value="Toxin_8"/>
    <property type="match status" value="1"/>
</dbReference>
<dbReference type="PROSITE" id="PS60014">
    <property type="entry name" value="ALPHA_CONOTOXIN"/>
    <property type="match status" value="1"/>
</dbReference>
<evidence type="ECO:0000255" key="1"/>
<evidence type="ECO:0000269" key="2">
    <source>
    </source>
</evidence>
<evidence type="ECO:0000269" key="3">
    <source>
    </source>
</evidence>
<evidence type="ECO:0000269" key="4">
    <source>
    </source>
</evidence>
<evidence type="ECO:0000269" key="5">
    <source>
    </source>
</evidence>
<evidence type="ECO:0000303" key="6">
    <source>
    </source>
</evidence>
<evidence type="ECO:0000305" key="7"/>
<evidence type="ECO:0000305" key="8">
    <source>
    </source>
</evidence>
<evidence type="ECO:0000312" key="9">
    <source>
        <dbReference type="PDB" id="1DG2"/>
    </source>
</evidence>
<evidence type="ECO:0000312" key="10">
    <source>
        <dbReference type="PDB" id="1MXN"/>
    </source>
</evidence>
<evidence type="ECO:0007829" key="11">
    <source>
        <dbReference type="PDB" id="1DG2"/>
    </source>
</evidence>
<comment type="function">
    <text evidence="4 5">Alpha-conotoxins act on postsynaptic membranes, they bind to the nicotinic acetylcholine receptors (nAChR) and thus inhibit them. This toxin blocks mammalian nAChR alpha-3-beta-4/CHRNA3-CHRNB4 subunits. Also exhibits inhibition of D.melanogaster alpha-7/CHRNA7 nAChRs (PubMed:25466886).</text>
</comment>
<comment type="subcellular location">
    <subcellularLocation>
        <location evidence="5">Secreted</location>
    </subcellularLocation>
</comment>
<comment type="tissue specificity">
    <text evidence="8">Expressed by the venom duct.</text>
</comment>
<comment type="domain">
    <text evidence="7">The cysteine framework is I (CC-C-C). Alpha4/6 pattern.</text>
</comment>
<comment type="mass spectrometry"/>
<comment type="similarity">
    <text evidence="7">Belongs to the conotoxin A superfamily.</text>
</comment>